<accession>B7LRQ3</accession>
<feature type="chain" id="PRO_1000200734" description="Peptide deformylase">
    <location>
        <begin position="1"/>
        <end position="169"/>
    </location>
</feature>
<feature type="active site" evidence="1">
    <location>
        <position position="134"/>
    </location>
</feature>
<feature type="binding site" evidence="1">
    <location>
        <position position="91"/>
    </location>
    <ligand>
        <name>Fe cation</name>
        <dbReference type="ChEBI" id="CHEBI:24875"/>
    </ligand>
</feature>
<feature type="binding site" evidence="1">
    <location>
        <position position="133"/>
    </location>
    <ligand>
        <name>Fe cation</name>
        <dbReference type="ChEBI" id="CHEBI:24875"/>
    </ligand>
</feature>
<feature type="binding site" evidence="1">
    <location>
        <position position="137"/>
    </location>
    <ligand>
        <name>Fe cation</name>
        <dbReference type="ChEBI" id="CHEBI:24875"/>
    </ligand>
</feature>
<dbReference type="EC" id="3.5.1.88" evidence="1"/>
<dbReference type="EMBL" id="CU928158">
    <property type="protein sequence ID" value="CAQ90750.1"/>
    <property type="molecule type" value="Genomic_DNA"/>
</dbReference>
<dbReference type="RefSeq" id="WP_000114984.1">
    <property type="nucleotide sequence ID" value="NC_011740.1"/>
</dbReference>
<dbReference type="SMR" id="B7LRQ3"/>
<dbReference type="GeneID" id="89518132"/>
<dbReference type="KEGG" id="efe:EFER_3270"/>
<dbReference type="HOGENOM" id="CLU_061901_2_1_6"/>
<dbReference type="OrthoDB" id="9804313at2"/>
<dbReference type="Proteomes" id="UP000000745">
    <property type="component" value="Chromosome"/>
</dbReference>
<dbReference type="GO" id="GO:0046872">
    <property type="term" value="F:metal ion binding"/>
    <property type="evidence" value="ECO:0007669"/>
    <property type="project" value="UniProtKB-KW"/>
</dbReference>
<dbReference type="GO" id="GO:0042586">
    <property type="term" value="F:peptide deformylase activity"/>
    <property type="evidence" value="ECO:0007669"/>
    <property type="project" value="UniProtKB-UniRule"/>
</dbReference>
<dbReference type="GO" id="GO:0043686">
    <property type="term" value="P:co-translational protein modification"/>
    <property type="evidence" value="ECO:0007669"/>
    <property type="project" value="TreeGrafter"/>
</dbReference>
<dbReference type="GO" id="GO:0006412">
    <property type="term" value="P:translation"/>
    <property type="evidence" value="ECO:0007669"/>
    <property type="project" value="UniProtKB-UniRule"/>
</dbReference>
<dbReference type="CDD" id="cd00487">
    <property type="entry name" value="Pep_deformylase"/>
    <property type="match status" value="1"/>
</dbReference>
<dbReference type="FunFam" id="3.90.45.10:FF:000001">
    <property type="entry name" value="Peptide deformylase"/>
    <property type="match status" value="1"/>
</dbReference>
<dbReference type="Gene3D" id="3.90.45.10">
    <property type="entry name" value="Peptide deformylase"/>
    <property type="match status" value="1"/>
</dbReference>
<dbReference type="HAMAP" id="MF_00163">
    <property type="entry name" value="Pep_deformylase"/>
    <property type="match status" value="1"/>
</dbReference>
<dbReference type="InterPro" id="IPR023635">
    <property type="entry name" value="Peptide_deformylase"/>
</dbReference>
<dbReference type="InterPro" id="IPR036821">
    <property type="entry name" value="Peptide_deformylase_sf"/>
</dbReference>
<dbReference type="NCBIfam" id="TIGR00079">
    <property type="entry name" value="pept_deformyl"/>
    <property type="match status" value="1"/>
</dbReference>
<dbReference type="NCBIfam" id="NF001159">
    <property type="entry name" value="PRK00150.1-3"/>
    <property type="match status" value="1"/>
</dbReference>
<dbReference type="PANTHER" id="PTHR10458">
    <property type="entry name" value="PEPTIDE DEFORMYLASE"/>
    <property type="match status" value="1"/>
</dbReference>
<dbReference type="PANTHER" id="PTHR10458:SF21">
    <property type="entry name" value="PEPTIDE DEFORMYLASE"/>
    <property type="match status" value="1"/>
</dbReference>
<dbReference type="Pfam" id="PF01327">
    <property type="entry name" value="Pep_deformylase"/>
    <property type="match status" value="1"/>
</dbReference>
<dbReference type="PIRSF" id="PIRSF004749">
    <property type="entry name" value="Pep_def"/>
    <property type="match status" value="1"/>
</dbReference>
<dbReference type="PRINTS" id="PR01576">
    <property type="entry name" value="PDEFORMYLASE"/>
</dbReference>
<dbReference type="SUPFAM" id="SSF56420">
    <property type="entry name" value="Peptide deformylase"/>
    <property type="match status" value="1"/>
</dbReference>
<name>DEF_ESCF3</name>
<keyword id="KW-0378">Hydrolase</keyword>
<keyword id="KW-0408">Iron</keyword>
<keyword id="KW-0479">Metal-binding</keyword>
<keyword id="KW-0648">Protein biosynthesis</keyword>
<comment type="function">
    <text evidence="1">Removes the formyl group from the N-terminal Met of newly synthesized proteins. Requires at least a dipeptide for an efficient rate of reaction. N-terminal L-methionine is a prerequisite for activity but the enzyme has broad specificity at other positions.</text>
</comment>
<comment type="catalytic activity">
    <reaction evidence="1">
        <text>N-terminal N-formyl-L-methionyl-[peptide] + H2O = N-terminal L-methionyl-[peptide] + formate</text>
        <dbReference type="Rhea" id="RHEA:24420"/>
        <dbReference type="Rhea" id="RHEA-COMP:10639"/>
        <dbReference type="Rhea" id="RHEA-COMP:10640"/>
        <dbReference type="ChEBI" id="CHEBI:15377"/>
        <dbReference type="ChEBI" id="CHEBI:15740"/>
        <dbReference type="ChEBI" id="CHEBI:49298"/>
        <dbReference type="ChEBI" id="CHEBI:64731"/>
        <dbReference type="EC" id="3.5.1.88"/>
    </reaction>
</comment>
<comment type="cofactor">
    <cofactor evidence="1">
        <name>Fe(2+)</name>
        <dbReference type="ChEBI" id="CHEBI:29033"/>
    </cofactor>
    <text evidence="1">Binds 1 Fe(2+) ion.</text>
</comment>
<comment type="similarity">
    <text evidence="1">Belongs to the polypeptide deformylase family.</text>
</comment>
<reference key="1">
    <citation type="journal article" date="2009" name="PLoS Genet.">
        <title>Organised genome dynamics in the Escherichia coli species results in highly diverse adaptive paths.</title>
        <authorList>
            <person name="Touchon M."/>
            <person name="Hoede C."/>
            <person name="Tenaillon O."/>
            <person name="Barbe V."/>
            <person name="Baeriswyl S."/>
            <person name="Bidet P."/>
            <person name="Bingen E."/>
            <person name="Bonacorsi S."/>
            <person name="Bouchier C."/>
            <person name="Bouvet O."/>
            <person name="Calteau A."/>
            <person name="Chiapello H."/>
            <person name="Clermont O."/>
            <person name="Cruveiller S."/>
            <person name="Danchin A."/>
            <person name="Diard M."/>
            <person name="Dossat C."/>
            <person name="Karoui M.E."/>
            <person name="Frapy E."/>
            <person name="Garry L."/>
            <person name="Ghigo J.M."/>
            <person name="Gilles A.M."/>
            <person name="Johnson J."/>
            <person name="Le Bouguenec C."/>
            <person name="Lescat M."/>
            <person name="Mangenot S."/>
            <person name="Martinez-Jehanne V."/>
            <person name="Matic I."/>
            <person name="Nassif X."/>
            <person name="Oztas S."/>
            <person name="Petit M.A."/>
            <person name="Pichon C."/>
            <person name="Rouy Z."/>
            <person name="Ruf C.S."/>
            <person name="Schneider D."/>
            <person name="Tourret J."/>
            <person name="Vacherie B."/>
            <person name="Vallenet D."/>
            <person name="Medigue C."/>
            <person name="Rocha E.P.C."/>
            <person name="Denamur E."/>
        </authorList>
    </citation>
    <scope>NUCLEOTIDE SEQUENCE [LARGE SCALE GENOMIC DNA]</scope>
    <source>
        <strain>ATCC 35469 / DSM 13698 / BCRC 15582 / CCUG 18766 / IAM 14443 / JCM 21226 / LMG 7866 / NBRC 102419 / NCTC 12128 / CDC 0568-73</strain>
    </source>
</reference>
<proteinExistence type="inferred from homology"/>
<sequence length="169" mass="19328">MSVLQVLHIPDERLRKVAKPVEEVNAEIQRIVDDMFETMYAEEGIGLAATQVDIHQRIIVIDVSENRDERLVLINPELLEKSGETGIEEGCLSIPEQRALVPRAEKVKIRALDRDGKPFELEADGLLAICIQHEMDHLVGKLFMDYLSPLKQQRIRQKVEKLDRLKARA</sequence>
<protein>
    <recommendedName>
        <fullName evidence="1">Peptide deformylase</fullName>
        <shortName evidence="1">PDF</shortName>
        <ecNumber evidence="1">3.5.1.88</ecNumber>
    </recommendedName>
    <alternativeName>
        <fullName evidence="1">Polypeptide deformylase</fullName>
    </alternativeName>
</protein>
<organism>
    <name type="scientific">Escherichia fergusonii (strain ATCC 35469 / DSM 13698 / CCUG 18766 / IAM 14443 / JCM 21226 / LMG 7866 / NBRC 102419 / NCTC 12128 / CDC 0568-73)</name>
    <dbReference type="NCBI Taxonomy" id="585054"/>
    <lineage>
        <taxon>Bacteria</taxon>
        <taxon>Pseudomonadati</taxon>
        <taxon>Pseudomonadota</taxon>
        <taxon>Gammaproteobacteria</taxon>
        <taxon>Enterobacterales</taxon>
        <taxon>Enterobacteriaceae</taxon>
        <taxon>Escherichia</taxon>
    </lineage>
</organism>
<gene>
    <name evidence="1" type="primary">def</name>
    <name type="ordered locus">EFER_3270</name>
</gene>
<evidence type="ECO:0000255" key="1">
    <source>
        <dbReference type="HAMAP-Rule" id="MF_00163"/>
    </source>
</evidence>